<comment type="function">
    <text evidence="1">Catalyzes the formation of S-adenosylmethionine (AdoMet) from methionine and ATP. The overall synthetic reaction is composed of two sequential steps, AdoMet formation and the subsequent tripolyphosphate hydrolysis which occurs prior to release of AdoMet from the enzyme.</text>
</comment>
<comment type="catalytic activity">
    <reaction evidence="1">
        <text>L-methionine + ATP + H2O = S-adenosyl-L-methionine + phosphate + diphosphate</text>
        <dbReference type="Rhea" id="RHEA:21080"/>
        <dbReference type="ChEBI" id="CHEBI:15377"/>
        <dbReference type="ChEBI" id="CHEBI:30616"/>
        <dbReference type="ChEBI" id="CHEBI:33019"/>
        <dbReference type="ChEBI" id="CHEBI:43474"/>
        <dbReference type="ChEBI" id="CHEBI:57844"/>
        <dbReference type="ChEBI" id="CHEBI:59789"/>
        <dbReference type="EC" id="2.5.1.6"/>
    </reaction>
</comment>
<comment type="cofactor">
    <cofactor evidence="1">
        <name>Mg(2+)</name>
        <dbReference type="ChEBI" id="CHEBI:18420"/>
    </cofactor>
    <text evidence="1">Binds 2 divalent ions per subunit.</text>
</comment>
<comment type="cofactor">
    <cofactor evidence="1">
        <name>K(+)</name>
        <dbReference type="ChEBI" id="CHEBI:29103"/>
    </cofactor>
    <text evidence="1">Binds 1 potassium ion per subunit.</text>
</comment>
<comment type="pathway">
    <text evidence="1">Amino-acid biosynthesis; S-adenosyl-L-methionine biosynthesis; S-adenosyl-L-methionine from L-methionine: step 1/1.</text>
</comment>
<comment type="subunit">
    <text evidence="1">Homotetramer; dimer of dimers.</text>
</comment>
<comment type="subcellular location">
    <subcellularLocation>
        <location evidence="1">Cytoplasm</location>
    </subcellularLocation>
</comment>
<comment type="similarity">
    <text evidence="1">Belongs to the AdoMet synthase family.</text>
</comment>
<feature type="chain" id="PRO_0000174508" description="S-adenosylmethionine synthase">
    <location>
        <begin position="1"/>
        <end position="389"/>
    </location>
</feature>
<feature type="region of interest" description="Flexible loop" evidence="1">
    <location>
        <begin position="99"/>
        <end position="109"/>
    </location>
</feature>
<feature type="binding site" description="in other chain" evidence="1">
    <location>
        <position position="15"/>
    </location>
    <ligand>
        <name>ATP</name>
        <dbReference type="ChEBI" id="CHEBI:30616"/>
        <note>ligand shared between two neighboring subunits</note>
    </ligand>
</feature>
<feature type="binding site" evidence="1">
    <location>
        <position position="17"/>
    </location>
    <ligand>
        <name>Mg(2+)</name>
        <dbReference type="ChEBI" id="CHEBI:18420"/>
    </ligand>
</feature>
<feature type="binding site" evidence="1">
    <location>
        <position position="43"/>
    </location>
    <ligand>
        <name>K(+)</name>
        <dbReference type="ChEBI" id="CHEBI:29103"/>
    </ligand>
</feature>
<feature type="binding site" description="in other chain" evidence="1">
    <location>
        <position position="56"/>
    </location>
    <ligand>
        <name>L-methionine</name>
        <dbReference type="ChEBI" id="CHEBI:57844"/>
        <note>ligand shared between two neighboring subunits</note>
    </ligand>
</feature>
<feature type="binding site" description="in other chain" evidence="1">
    <location>
        <position position="99"/>
    </location>
    <ligand>
        <name>L-methionine</name>
        <dbReference type="ChEBI" id="CHEBI:57844"/>
        <note>ligand shared between two neighboring subunits</note>
    </ligand>
</feature>
<feature type="binding site" description="in other chain" evidence="1">
    <location>
        <begin position="166"/>
        <end position="168"/>
    </location>
    <ligand>
        <name>ATP</name>
        <dbReference type="ChEBI" id="CHEBI:30616"/>
        <note>ligand shared between two neighboring subunits</note>
    </ligand>
</feature>
<feature type="binding site" description="in other chain" evidence="1">
    <location>
        <begin position="234"/>
        <end position="235"/>
    </location>
    <ligand>
        <name>ATP</name>
        <dbReference type="ChEBI" id="CHEBI:30616"/>
        <note>ligand shared between two neighboring subunits</note>
    </ligand>
</feature>
<feature type="binding site" evidence="1">
    <location>
        <position position="243"/>
    </location>
    <ligand>
        <name>ATP</name>
        <dbReference type="ChEBI" id="CHEBI:30616"/>
        <note>ligand shared between two neighboring subunits</note>
    </ligand>
</feature>
<feature type="binding site" evidence="1">
    <location>
        <position position="243"/>
    </location>
    <ligand>
        <name>L-methionine</name>
        <dbReference type="ChEBI" id="CHEBI:57844"/>
        <note>ligand shared between two neighboring subunits</note>
    </ligand>
</feature>
<feature type="binding site" description="in other chain" evidence="1">
    <location>
        <begin position="249"/>
        <end position="250"/>
    </location>
    <ligand>
        <name>ATP</name>
        <dbReference type="ChEBI" id="CHEBI:30616"/>
        <note>ligand shared between two neighboring subunits</note>
    </ligand>
</feature>
<feature type="binding site" evidence="1">
    <location>
        <position position="266"/>
    </location>
    <ligand>
        <name>ATP</name>
        <dbReference type="ChEBI" id="CHEBI:30616"/>
        <note>ligand shared between two neighboring subunits</note>
    </ligand>
</feature>
<feature type="binding site" evidence="1">
    <location>
        <position position="270"/>
    </location>
    <ligand>
        <name>ATP</name>
        <dbReference type="ChEBI" id="CHEBI:30616"/>
        <note>ligand shared between two neighboring subunits</note>
    </ligand>
</feature>
<feature type="binding site" description="in other chain" evidence="1">
    <location>
        <position position="274"/>
    </location>
    <ligand>
        <name>L-methionine</name>
        <dbReference type="ChEBI" id="CHEBI:57844"/>
        <note>ligand shared between two neighboring subunits</note>
    </ligand>
</feature>
<accession>Q7NZF9</accession>
<protein>
    <recommendedName>
        <fullName evidence="1">S-adenosylmethionine synthase</fullName>
        <shortName evidence="1">AdoMet synthase</shortName>
        <ecNumber evidence="1">2.5.1.6</ecNumber>
    </recommendedName>
    <alternativeName>
        <fullName evidence="1">MAT</fullName>
    </alternativeName>
    <alternativeName>
        <fullName evidence="1">Methionine adenosyltransferase</fullName>
    </alternativeName>
</protein>
<dbReference type="EC" id="2.5.1.6" evidence="1"/>
<dbReference type="EMBL" id="AE016825">
    <property type="protein sequence ID" value="AAQ58637.1"/>
    <property type="molecule type" value="Genomic_DNA"/>
</dbReference>
<dbReference type="RefSeq" id="WP_011134518.1">
    <property type="nucleotide sequence ID" value="NC_005085.1"/>
</dbReference>
<dbReference type="SMR" id="Q7NZF9"/>
<dbReference type="STRING" id="243365.CV_0963"/>
<dbReference type="GeneID" id="66366652"/>
<dbReference type="KEGG" id="cvi:CV_0963"/>
<dbReference type="eggNOG" id="COG0192">
    <property type="taxonomic scope" value="Bacteria"/>
</dbReference>
<dbReference type="HOGENOM" id="CLU_041802_1_1_4"/>
<dbReference type="OrthoDB" id="9801686at2"/>
<dbReference type="UniPathway" id="UPA00315">
    <property type="reaction ID" value="UER00080"/>
</dbReference>
<dbReference type="Proteomes" id="UP000001424">
    <property type="component" value="Chromosome"/>
</dbReference>
<dbReference type="GO" id="GO:0005737">
    <property type="term" value="C:cytoplasm"/>
    <property type="evidence" value="ECO:0007669"/>
    <property type="project" value="UniProtKB-SubCell"/>
</dbReference>
<dbReference type="GO" id="GO:0005524">
    <property type="term" value="F:ATP binding"/>
    <property type="evidence" value="ECO:0007669"/>
    <property type="project" value="UniProtKB-UniRule"/>
</dbReference>
<dbReference type="GO" id="GO:0000287">
    <property type="term" value="F:magnesium ion binding"/>
    <property type="evidence" value="ECO:0007669"/>
    <property type="project" value="UniProtKB-UniRule"/>
</dbReference>
<dbReference type="GO" id="GO:0004478">
    <property type="term" value="F:methionine adenosyltransferase activity"/>
    <property type="evidence" value="ECO:0007669"/>
    <property type="project" value="UniProtKB-UniRule"/>
</dbReference>
<dbReference type="GO" id="GO:0006730">
    <property type="term" value="P:one-carbon metabolic process"/>
    <property type="evidence" value="ECO:0007669"/>
    <property type="project" value="UniProtKB-KW"/>
</dbReference>
<dbReference type="GO" id="GO:0006556">
    <property type="term" value="P:S-adenosylmethionine biosynthetic process"/>
    <property type="evidence" value="ECO:0007669"/>
    <property type="project" value="UniProtKB-UniRule"/>
</dbReference>
<dbReference type="CDD" id="cd18079">
    <property type="entry name" value="S-AdoMet_synt"/>
    <property type="match status" value="1"/>
</dbReference>
<dbReference type="FunFam" id="3.30.300.10:FF:000003">
    <property type="entry name" value="S-adenosylmethionine synthase"/>
    <property type="match status" value="1"/>
</dbReference>
<dbReference type="FunFam" id="3.30.300.10:FF:000004">
    <property type="entry name" value="S-adenosylmethionine synthase"/>
    <property type="match status" value="1"/>
</dbReference>
<dbReference type="Gene3D" id="3.30.300.10">
    <property type="match status" value="3"/>
</dbReference>
<dbReference type="HAMAP" id="MF_00086">
    <property type="entry name" value="S_AdoMet_synth1"/>
    <property type="match status" value="1"/>
</dbReference>
<dbReference type="InterPro" id="IPR022631">
    <property type="entry name" value="ADOMET_SYNTHASE_CS"/>
</dbReference>
<dbReference type="InterPro" id="IPR022630">
    <property type="entry name" value="S-AdoMet_synt_C"/>
</dbReference>
<dbReference type="InterPro" id="IPR022629">
    <property type="entry name" value="S-AdoMet_synt_central"/>
</dbReference>
<dbReference type="InterPro" id="IPR022628">
    <property type="entry name" value="S-AdoMet_synt_N"/>
</dbReference>
<dbReference type="InterPro" id="IPR002133">
    <property type="entry name" value="S-AdoMet_synthetase"/>
</dbReference>
<dbReference type="InterPro" id="IPR022636">
    <property type="entry name" value="S-AdoMet_synthetase_sfam"/>
</dbReference>
<dbReference type="NCBIfam" id="TIGR01034">
    <property type="entry name" value="metK"/>
    <property type="match status" value="1"/>
</dbReference>
<dbReference type="PANTHER" id="PTHR11964">
    <property type="entry name" value="S-ADENOSYLMETHIONINE SYNTHETASE"/>
    <property type="match status" value="1"/>
</dbReference>
<dbReference type="Pfam" id="PF02773">
    <property type="entry name" value="S-AdoMet_synt_C"/>
    <property type="match status" value="1"/>
</dbReference>
<dbReference type="Pfam" id="PF02772">
    <property type="entry name" value="S-AdoMet_synt_M"/>
    <property type="match status" value="1"/>
</dbReference>
<dbReference type="Pfam" id="PF00438">
    <property type="entry name" value="S-AdoMet_synt_N"/>
    <property type="match status" value="1"/>
</dbReference>
<dbReference type="PIRSF" id="PIRSF000497">
    <property type="entry name" value="MAT"/>
    <property type="match status" value="1"/>
</dbReference>
<dbReference type="SUPFAM" id="SSF55973">
    <property type="entry name" value="S-adenosylmethionine synthetase"/>
    <property type="match status" value="3"/>
</dbReference>
<dbReference type="PROSITE" id="PS00376">
    <property type="entry name" value="ADOMET_SYNTHASE_1"/>
    <property type="match status" value="1"/>
</dbReference>
<dbReference type="PROSITE" id="PS00377">
    <property type="entry name" value="ADOMET_SYNTHASE_2"/>
    <property type="match status" value="1"/>
</dbReference>
<evidence type="ECO:0000255" key="1">
    <source>
        <dbReference type="HAMAP-Rule" id="MF_00086"/>
    </source>
</evidence>
<name>METK_CHRVO</name>
<gene>
    <name evidence="1" type="primary">metK</name>
    <name type="ordered locus">CV_0963</name>
</gene>
<organism>
    <name type="scientific">Chromobacterium violaceum (strain ATCC 12472 / DSM 30191 / JCM 1249 / CCUG 213 / NBRC 12614 / NCIMB 9131 / NCTC 9757 / MK)</name>
    <dbReference type="NCBI Taxonomy" id="243365"/>
    <lineage>
        <taxon>Bacteria</taxon>
        <taxon>Pseudomonadati</taxon>
        <taxon>Pseudomonadota</taxon>
        <taxon>Betaproteobacteria</taxon>
        <taxon>Neisseriales</taxon>
        <taxon>Chromobacteriaceae</taxon>
        <taxon>Chromobacterium</taxon>
    </lineage>
</organism>
<reference key="1">
    <citation type="journal article" date="2003" name="Proc. Natl. Acad. Sci. U.S.A.">
        <title>The complete genome sequence of Chromobacterium violaceum reveals remarkable and exploitable bacterial adaptability.</title>
        <authorList>
            <person name="Vasconcelos A.T.R."/>
            <person name="de Almeida D.F."/>
            <person name="Hungria M."/>
            <person name="Guimaraes C.T."/>
            <person name="Antonio R.V."/>
            <person name="Almeida F.C."/>
            <person name="de Almeida L.G.P."/>
            <person name="de Almeida R."/>
            <person name="Alves-Gomes J.A."/>
            <person name="Andrade E.M."/>
            <person name="Araripe J."/>
            <person name="de Araujo M.F.F."/>
            <person name="Astolfi-Filho S."/>
            <person name="Azevedo V."/>
            <person name="Baptista A.J."/>
            <person name="Bataus L.A.M."/>
            <person name="Batista J.S."/>
            <person name="Belo A."/>
            <person name="van den Berg C."/>
            <person name="Bogo M."/>
            <person name="Bonatto S."/>
            <person name="Bordignon J."/>
            <person name="Brigido M.M."/>
            <person name="Brito C.A."/>
            <person name="Brocchi M."/>
            <person name="Burity H.A."/>
            <person name="Camargo A.A."/>
            <person name="Cardoso D.D.P."/>
            <person name="Carneiro N.P."/>
            <person name="Carraro D.M."/>
            <person name="Carvalho C.M.B."/>
            <person name="Cascardo J.C.M."/>
            <person name="Cavada B.S."/>
            <person name="Chueire L.M.O."/>
            <person name="Creczynski-Pasa T.B."/>
            <person name="Cunha-Junior N.C."/>
            <person name="Fagundes N."/>
            <person name="Falcao C.L."/>
            <person name="Fantinatti F."/>
            <person name="Farias I.P."/>
            <person name="Felipe M.S.S."/>
            <person name="Ferrari L.P."/>
            <person name="Ferro J.A."/>
            <person name="Ferro M.I.T."/>
            <person name="Franco G.R."/>
            <person name="Freitas N.S.A."/>
            <person name="Furlan L.R."/>
            <person name="Gazzinelli R.T."/>
            <person name="Gomes E.A."/>
            <person name="Goncalves P.R."/>
            <person name="Grangeiro T.B."/>
            <person name="Grattapaglia D."/>
            <person name="Grisard E.C."/>
            <person name="Hanna E.S."/>
            <person name="Jardim S.N."/>
            <person name="Laurino J."/>
            <person name="Leoi L.C.T."/>
            <person name="Lima L.F.A."/>
            <person name="Loureiro M.F."/>
            <person name="Lyra M.C.C.P."/>
            <person name="Madeira H.M.F."/>
            <person name="Manfio G.P."/>
            <person name="Maranhao A.Q."/>
            <person name="Martins W.S."/>
            <person name="di Mauro S.M.Z."/>
            <person name="de Medeiros S.R.B."/>
            <person name="Meissner R.V."/>
            <person name="Moreira M.A.M."/>
            <person name="Nascimento F.F."/>
            <person name="Nicolas M.F."/>
            <person name="Oliveira J.G."/>
            <person name="Oliveira S.C."/>
            <person name="Paixao R.F.C."/>
            <person name="Parente J.A."/>
            <person name="Pedrosa F.O."/>
            <person name="Pena S.D.J."/>
            <person name="Pereira J.O."/>
            <person name="Pereira M."/>
            <person name="Pinto L.S.R.C."/>
            <person name="Pinto L.S."/>
            <person name="Porto J.I.R."/>
            <person name="Potrich D.P."/>
            <person name="Ramalho-Neto C.E."/>
            <person name="Reis A.M.M."/>
            <person name="Rigo L.U."/>
            <person name="Rondinelli E."/>
            <person name="Santos E.B.P."/>
            <person name="Santos F.R."/>
            <person name="Schneider M.P.C."/>
            <person name="Seuanez H.N."/>
            <person name="Silva A.M.R."/>
            <person name="da Silva A.L.C."/>
            <person name="Silva D.W."/>
            <person name="Silva R."/>
            <person name="Simoes I.C."/>
            <person name="Simon D."/>
            <person name="Soares C.M.A."/>
            <person name="Soares R.B.A."/>
            <person name="Souza E.M."/>
            <person name="Souza K.R.L."/>
            <person name="Souza R.C."/>
            <person name="Steffens M.B.R."/>
            <person name="Steindel M."/>
            <person name="Teixeira S.R."/>
            <person name="Urmenyi T."/>
            <person name="Vettore A."/>
            <person name="Wassem R."/>
            <person name="Zaha A."/>
            <person name="Simpson A.J.G."/>
        </authorList>
    </citation>
    <scope>NUCLEOTIDE SEQUENCE [LARGE SCALE GENOMIC DNA]</scope>
    <source>
        <strain>ATCC 12472 / DSM 30191 / JCM 1249 / CCUG 213 / NBRC 12614 / NCIMB 9131 / NCTC 9757 / MK</strain>
    </source>
</reference>
<keyword id="KW-0067">ATP-binding</keyword>
<keyword id="KW-0963">Cytoplasm</keyword>
<keyword id="KW-0460">Magnesium</keyword>
<keyword id="KW-0479">Metal-binding</keyword>
<keyword id="KW-0547">Nucleotide-binding</keyword>
<keyword id="KW-0554">One-carbon metabolism</keyword>
<keyword id="KW-0630">Potassium</keyword>
<keyword id="KW-1185">Reference proteome</keyword>
<keyword id="KW-0808">Transferase</keyword>
<proteinExistence type="inferred from homology"/>
<sequence length="389" mass="42343">MSEYLFTSESVSEGHPDKVADQISDAILDAILREDKHARVAAETLVNTGLVVLAGEITTTANVDYIKIARETIKRIGYDDSELGFDFRGCAVMACYDKQSPDIAQGVNEGEGLDLNQGAGDQGLMFGYACDETPTLMPFPIYYAHRLVQRQAELRKDGRLPWLRPDAKSQITCVYDAATGLPKRIDTVVLSTQHSPDIDHKTLSEAVIEDIVKPVLPPEMITPETKFLINPTGRFVIGGPMGDCGLTGRKIIVDTYGGAAPHGGGAFSGKDPSKVDRSAAYAGRYVAKNIVAAGLARQCQIQVSYAIGVAEPTSIAVDTFGTNKIPNEKIVELVKKHFDLRPKGIIQMLDLLRPIYGKTAAYGHFGREEPEFSWERTDKVEALRADAGL</sequence>